<feature type="chain" id="PRO_0000382223" description="Histone-arginine methyltransferase CARMER">
    <location>
        <begin position="1"/>
        <end position="544"/>
    </location>
</feature>
<feature type="domain" description="SAM-dependent MTase PRMT-type" evidence="5">
    <location>
        <begin position="150"/>
        <end position="459"/>
    </location>
</feature>
<feature type="region of interest" description="Disordered" evidence="6">
    <location>
        <begin position="505"/>
        <end position="527"/>
    </location>
</feature>
<feature type="compositionally biased region" description="Polar residues" evidence="6">
    <location>
        <begin position="505"/>
        <end position="520"/>
    </location>
</feature>
<feature type="binding site" evidence="2">
    <location>
        <position position="163"/>
    </location>
    <ligand>
        <name>S-adenosyl-L-methionine</name>
        <dbReference type="ChEBI" id="CHEBI:59789"/>
    </ligand>
</feature>
<feature type="binding site" evidence="2">
    <location>
        <position position="172"/>
    </location>
    <ligand>
        <name>S-adenosyl-L-methionine</name>
        <dbReference type="ChEBI" id="CHEBI:59789"/>
    </ligand>
</feature>
<feature type="binding site" evidence="2">
    <location>
        <position position="196"/>
    </location>
    <ligand>
        <name>S-adenosyl-L-methionine</name>
        <dbReference type="ChEBI" id="CHEBI:59789"/>
    </ligand>
</feature>
<feature type="binding site" evidence="2">
    <location>
        <position position="218"/>
    </location>
    <ligand>
        <name>S-adenosyl-L-methionine</name>
        <dbReference type="ChEBI" id="CHEBI:59789"/>
    </ligand>
</feature>
<feature type="binding site" evidence="2">
    <location>
        <position position="247"/>
    </location>
    <ligand>
        <name>S-adenosyl-L-methionine</name>
        <dbReference type="ChEBI" id="CHEBI:59789"/>
    </ligand>
</feature>
<feature type="binding site" evidence="1">
    <location>
        <position position="275"/>
    </location>
    <ligand>
        <name>S-adenosyl-L-methionine</name>
        <dbReference type="ChEBI" id="CHEBI:59789"/>
    </ligand>
</feature>
<feature type="modified residue" description="Asymmetric dimethylarginine; by autocatalysis" evidence="3">
    <location>
        <position position="514"/>
    </location>
</feature>
<comment type="function">
    <text evidence="3">Methylates (mono- and asymmetric dimethylation) the guanidino nitrogens of arginyl residues in proteins. May methylate histone H3 at 'Arg-17' and activate transcription via chromatin remodeling.</text>
</comment>
<comment type="catalytic activity">
    <reaction evidence="3">
        <text>L-arginyl-[protein] + 2 S-adenosyl-L-methionine = N(omega),N(omega)-dimethyl-L-arginyl-[protein] + 2 S-adenosyl-L-homocysteine + 2 H(+)</text>
        <dbReference type="Rhea" id="RHEA:48096"/>
        <dbReference type="Rhea" id="RHEA-COMP:10532"/>
        <dbReference type="Rhea" id="RHEA-COMP:11991"/>
        <dbReference type="ChEBI" id="CHEBI:15378"/>
        <dbReference type="ChEBI" id="CHEBI:29965"/>
        <dbReference type="ChEBI" id="CHEBI:57856"/>
        <dbReference type="ChEBI" id="CHEBI:59789"/>
        <dbReference type="ChEBI" id="CHEBI:61897"/>
        <dbReference type="EC" id="2.1.1.319"/>
    </reaction>
</comment>
<comment type="subunit">
    <text evidence="1">Homodimer.</text>
</comment>
<comment type="subcellular location">
    <subcellularLocation>
        <location evidence="4">Cytoplasm</location>
    </subcellularLocation>
    <subcellularLocation>
        <location evidence="4">Nucleus</location>
    </subcellularLocation>
</comment>
<comment type="PTM">
    <text evidence="1">The dimethylated protein is the major form.</text>
</comment>
<comment type="similarity">
    <text evidence="5">Belongs to the class I-like SAM-binding methyltransferase superfamily. Protein arginine N-methyltransferase family.</text>
</comment>
<evidence type="ECO:0000250" key="1"/>
<evidence type="ECO:0000250" key="2">
    <source>
        <dbReference type="UniProtKB" id="Q63009"/>
    </source>
</evidence>
<evidence type="ECO:0000250" key="3">
    <source>
        <dbReference type="UniProtKB" id="Q7Q2B7"/>
    </source>
</evidence>
<evidence type="ECO:0000250" key="4">
    <source>
        <dbReference type="UniProtKB" id="Q9VH48"/>
    </source>
</evidence>
<evidence type="ECO:0000255" key="5">
    <source>
        <dbReference type="PROSITE-ProRule" id="PRU01015"/>
    </source>
</evidence>
<evidence type="ECO:0000256" key="6">
    <source>
        <dbReference type="SAM" id="MobiDB-lite"/>
    </source>
</evidence>
<evidence type="ECO:0000312" key="7">
    <source>
        <dbReference type="EMBL" id="EDV90514.1"/>
    </source>
</evidence>
<reference evidence="7" key="1">
    <citation type="journal article" date="2007" name="Nature">
        <title>Evolution of genes and genomes on the Drosophila phylogeny.</title>
        <authorList>
            <consortium name="Drosophila 12 genomes consortium"/>
        </authorList>
    </citation>
    <scope>NUCLEOTIDE SEQUENCE [LARGE SCALE GENOMIC DNA]</scope>
    <source>
        <strain evidence="7">Tucson 15287-2541.00</strain>
    </source>
</reference>
<keyword id="KW-0156">Chromatin regulator</keyword>
<keyword id="KW-0963">Cytoplasm</keyword>
<keyword id="KW-0488">Methylation</keyword>
<keyword id="KW-0489">Methyltransferase</keyword>
<keyword id="KW-0539">Nucleus</keyword>
<keyword id="KW-1185">Reference proteome</keyword>
<keyword id="KW-0949">S-adenosyl-L-methionine</keyword>
<keyword id="KW-0804">Transcription</keyword>
<keyword id="KW-0805">Transcription regulation</keyword>
<keyword id="KW-0808">Transferase</keyword>
<organism>
    <name type="scientific">Drosophila grimshawi</name>
    <name type="common">Hawaiian fruit fly</name>
    <name type="synonym">Idiomyia grimshawi</name>
    <dbReference type="NCBI Taxonomy" id="7222"/>
    <lineage>
        <taxon>Eukaryota</taxon>
        <taxon>Metazoa</taxon>
        <taxon>Ecdysozoa</taxon>
        <taxon>Arthropoda</taxon>
        <taxon>Hexapoda</taxon>
        <taxon>Insecta</taxon>
        <taxon>Pterygota</taxon>
        <taxon>Neoptera</taxon>
        <taxon>Endopterygota</taxon>
        <taxon>Diptera</taxon>
        <taxon>Brachycera</taxon>
        <taxon>Muscomorpha</taxon>
        <taxon>Ephydroidea</taxon>
        <taxon>Drosophilidae</taxon>
        <taxon>Drosophila</taxon>
        <taxon>Hawaiian Drosophila</taxon>
    </lineage>
</organism>
<protein>
    <recommendedName>
        <fullName evidence="3">Histone-arginine methyltransferase CARMER</fullName>
        <ecNumber evidence="3">2.1.1.319</ecNumber>
    </recommendedName>
</protein>
<dbReference type="EC" id="2.1.1.319" evidence="3"/>
<dbReference type="EMBL" id="CH916377">
    <property type="protein sequence ID" value="EDV90514.1"/>
    <property type="molecule type" value="Genomic_DNA"/>
</dbReference>
<dbReference type="SMR" id="B4JXV2"/>
<dbReference type="FunCoup" id="B4JXV2">
    <property type="interactions" value="2359"/>
</dbReference>
<dbReference type="STRING" id="7222.B4JXV2"/>
<dbReference type="EnsemblMetazoa" id="FBtr0149591">
    <property type="protein sequence ID" value="FBpp0148083"/>
    <property type="gene ID" value="FBgn0121653"/>
</dbReference>
<dbReference type="EnsemblMetazoa" id="XM_001995820.3">
    <property type="protein sequence ID" value="XP_001995856.1"/>
    <property type="gene ID" value="LOC6569705"/>
</dbReference>
<dbReference type="GeneID" id="6569705"/>
<dbReference type="KEGG" id="dgr:6569705"/>
<dbReference type="CTD" id="420"/>
<dbReference type="eggNOG" id="KOG1500">
    <property type="taxonomic scope" value="Eukaryota"/>
</dbReference>
<dbReference type="HOGENOM" id="CLU_017375_0_1_1"/>
<dbReference type="InParanoid" id="B4JXV2"/>
<dbReference type="OMA" id="GIGDGMD"/>
<dbReference type="OrthoDB" id="7848332at2759"/>
<dbReference type="PhylomeDB" id="B4JXV2"/>
<dbReference type="Proteomes" id="UP000001070">
    <property type="component" value="Unassembled WGS sequence"/>
</dbReference>
<dbReference type="GO" id="GO:0005737">
    <property type="term" value="C:cytoplasm"/>
    <property type="evidence" value="ECO:0000250"/>
    <property type="project" value="UniProtKB"/>
</dbReference>
<dbReference type="GO" id="GO:0005829">
    <property type="term" value="C:cytosol"/>
    <property type="evidence" value="ECO:0007669"/>
    <property type="project" value="EnsemblMetazoa"/>
</dbReference>
<dbReference type="GO" id="GO:0035097">
    <property type="term" value="C:histone methyltransferase complex"/>
    <property type="evidence" value="ECO:0007669"/>
    <property type="project" value="EnsemblMetazoa"/>
</dbReference>
<dbReference type="GO" id="GO:0005634">
    <property type="term" value="C:nucleus"/>
    <property type="evidence" value="ECO:0000250"/>
    <property type="project" value="UniProtKB"/>
</dbReference>
<dbReference type="GO" id="GO:0035642">
    <property type="term" value="F:histone H3R17 methyltransferase activity"/>
    <property type="evidence" value="ECO:0000250"/>
    <property type="project" value="UniProtKB"/>
</dbReference>
<dbReference type="GO" id="GO:0070611">
    <property type="term" value="F:histone H3R2 methyltransferase activity"/>
    <property type="evidence" value="ECO:0000250"/>
    <property type="project" value="UniProtKB"/>
</dbReference>
<dbReference type="GO" id="GO:0140903">
    <property type="term" value="F:histone H3R26 methyltransferase activity"/>
    <property type="evidence" value="ECO:0000250"/>
    <property type="project" value="UniProtKB"/>
</dbReference>
<dbReference type="GO" id="GO:0035242">
    <property type="term" value="F:protein-arginine omega-N asymmetric methyltransferase activity"/>
    <property type="evidence" value="ECO:0000250"/>
    <property type="project" value="UniProtKB"/>
</dbReference>
<dbReference type="GO" id="GO:0035241">
    <property type="term" value="F:protein-arginine omega-N monomethyltransferase activity"/>
    <property type="evidence" value="ECO:0000250"/>
    <property type="project" value="UniProtKB"/>
</dbReference>
<dbReference type="GO" id="GO:0006338">
    <property type="term" value="P:chromatin remodeling"/>
    <property type="evidence" value="ECO:0000250"/>
    <property type="project" value="UniProtKB"/>
</dbReference>
<dbReference type="GO" id="GO:0019919">
    <property type="term" value="P:peptidyl-arginine methylation, to asymmetrical-dimethyl arginine"/>
    <property type="evidence" value="ECO:0000250"/>
    <property type="project" value="UniProtKB"/>
</dbReference>
<dbReference type="GO" id="GO:0120142">
    <property type="term" value="P:positive regulation of ecdysone receptor signaling pathway"/>
    <property type="evidence" value="ECO:0007669"/>
    <property type="project" value="EnsemblMetazoa"/>
</dbReference>
<dbReference type="GO" id="GO:0045944">
    <property type="term" value="P:positive regulation of transcription by RNA polymerase II"/>
    <property type="evidence" value="ECO:0007669"/>
    <property type="project" value="EnsemblMetazoa"/>
</dbReference>
<dbReference type="GO" id="GO:0006355">
    <property type="term" value="P:regulation of DNA-templated transcription"/>
    <property type="evidence" value="ECO:0000250"/>
    <property type="project" value="UniProtKB"/>
</dbReference>
<dbReference type="CDD" id="cd02440">
    <property type="entry name" value="AdoMet_MTases"/>
    <property type="match status" value="1"/>
</dbReference>
<dbReference type="FunFam" id="2.70.160.11:FF:000002">
    <property type="entry name" value="Probable histone-arginine methyltransferase CARM1"/>
    <property type="match status" value="1"/>
</dbReference>
<dbReference type="FunFam" id="3.40.50.150:FF:000031">
    <property type="entry name" value="Putative Histone-arginine methyltransferase CARM1"/>
    <property type="match status" value="1"/>
</dbReference>
<dbReference type="Gene3D" id="2.70.160.11">
    <property type="entry name" value="Hnrnp arginine n-methyltransferase1"/>
    <property type="match status" value="1"/>
</dbReference>
<dbReference type="Gene3D" id="2.30.29.30">
    <property type="entry name" value="Pleckstrin-homology domain (PH domain)/Phosphotyrosine-binding domain (PTB)"/>
    <property type="match status" value="1"/>
</dbReference>
<dbReference type="Gene3D" id="3.40.50.150">
    <property type="entry name" value="Vaccinia Virus protein VP39"/>
    <property type="match status" value="1"/>
</dbReference>
<dbReference type="InterPro" id="IPR025799">
    <property type="entry name" value="Arg_MeTrfase"/>
</dbReference>
<dbReference type="InterPro" id="IPR011993">
    <property type="entry name" value="PH-like_dom_sf"/>
</dbReference>
<dbReference type="InterPro" id="IPR055135">
    <property type="entry name" value="PRMT_dom"/>
</dbReference>
<dbReference type="InterPro" id="IPR029063">
    <property type="entry name" value="SAM-dependent_MTases_sf"/>
</dbReference>
<dbReference type="PANTHER" id="PTHR11006:SF10">
    <property type="entry name" value="HISTONE-ARGININE METHYLTRANSFERASE CARMER-RELATED"/>
    <property type="match status" value="1"/>
</dbReference>
<dbReference type="PANTHER" id="PTHR11006">
    <property type="entry name" value="PROTEIN ARGININE N-METHYLTRANSFERASE"/>
    <property type="match status" value="1"/>
</dbReference>
<dbReference type="Pfam" id="PF06325">
    <property type="entry name" value="PrmA"/>
    <property type="match status" value="1"/>
</dbReference>
<dbReference type="Pfam" id="PF22528">
    <property type="entry name" value="PRMT_C"/>
    <property type="match status" value="1"/>
</dbReference>
<dbReference type="SUPFAM" id="SSF53335">
    <property type="entry name" value="S-adenosyl-L-methionine-dependent methyltransferases"/>
    <property type="match status" value="1"/>
</dbReference>
<dbReference type="PROSITE" id="PS51678">
    <property type="entry name" value="SAM_MT_PRMT"/>
    <property type="match status" value="1"/>
</dbReference>
<sequence length="544" mass="61251">MSNSSRNATEQNNKCSAAGVNSVAAALCPLSNCQFSGVVISAIADEQKLEFNNIYKSSCTLSCSYDSQGVLVRIMLDNDQGHVLKEYMLSADTDAAQLGKRSYAVSLESDNLVLRFASDKDQQLFRKVVENVKHLRPKSVFSQRTEESSASQYFQFYGYLSQQQNMMQDYVRTSTYQRAILGNSIDFQDKIVLDVGAGSGILSFFAVQAGAAKVYAIEASNMAQYAQQLVESNNVQHKISVIPGKIEEIELPEKVDVIISEPMGYMLYNERMLETYLHARKWLKPQGKMYPTHGDLHIAPFSDDSLYSEQYNKANFWYQSAFHGVDLTTLHKEGMKEYFRQPIVDTFDIRICMAKSVRHVCDFLNDKENDLHLIDIPLEFHILQTGICHGLAFWFDVEFSGSTQNVWLSTSPTAPLTHWYQVRCLLPMPIFIKQGQTLTGRVLLEANRRQSYDVTIDLHIEGTLISSSNTLDLKNPYFRYTGAPVQAPPGTNTQSPSEQYWTQMDTQQQQQGSRNSNSMLNGGLSVNGMADPGMDINLGLMHPH</sequence>
<proteinExistence type="inferred from homology"/>
<accession>B4JXV2</accession>
<name>CARM1_DROGR</name>
<gene>
    <name type="primary">Art4</name>
    <name type="ORF">GH14177</name>
</gene>